<sequence length="880" mass="99645">MRKLTPMMQQYMEIKNQYKDALMFFRLGDFYELFFDDAETASRELEITLTARDCGLESKAPMCGVPYHAANGYIDKLVSKGYKVAICEQVEDPSVAKGIVKRDVVRVITPGTLIDTNLLEDKKNNYLVSLYMSSLGCGFSYVDISTGELLSTEIVGTSIEQNLIDEISKIEPNELIYFVEEEDKIGTNFIEGIRKKLNIHISKYDPWTFEESYAMNQIKNQFNILTVESLGFSLNHLGINATGALIHYLKSTQKRTLSHINKINIYTFTEKMVLDISTRRNLELTETIRGKNKKGSLLWILDKTQTAMGGRMIRKWIEEPLLNIQNINRRLEAVATLKNDILLRCELKESLKQIYDLERLSGKIAFGSATPRDLVALKKSVAFLPDIKKLFENENSGLLKELLNNIDTLEDIQALIESSILDEPSISLKDGGIIKEGYNDELDELYVAAREGKHWIAKLEQAEKDRTGIKSLKVGYNKIFGYYIEITKSNLHLAPENYIRKQTLANCERYITPELKELEDKILGAEEKSIAIEYEQFIEIRNMLLHEIERIQRTARAVAELDVLYSFAEAASENNYVKPTVNSSETIDIKEGRHPVVEKVLENNMFISNDTYINTEDEQLLMITGPNMAGKSTYMRQVALIILMAQIGSFVPATSATIGITDRIFTRVGANDDLSQGQSTFMVEMSEMATIVNLATKKSLLIVDEIGRGTSTFDGLSIAWSTAEYICQSLGSRTLFSTHYHELTKLSETYRGIKNYKVLVKEDKEDVIFLHKVVKGNADRSYGIQVAKLAGLPAAIITRASHILSDLERESIQKEQYIIESTAENTLTASTDVANEKQLKLDDFIESEIVKDLKKINLLETTPMDALNILYQLQKKVAEI</sequence>
<evidence type="ECO:0000255" key="1">
    <source>
        <dbReference type="HAMAP-Rule" id="MF_00096"/>
    </source>
</evidence>
<evidence type="ECO:0000305" key="2"/>
<dbReference type="EMBL" id="CP000853">
    <property type="protein sequence ID" value="ABW19097.1"/>
    <property type="status" value="ALT_INIT"/>
    <property type="molecule type" value="Genomic_DNA"/>
</dbReference>
<dbReference type="RefSeq" id="WP_012159409.1">
    <property type="nucleotide sequence ID" value="NC_009922.1"/>
</dbReference>
<dbReference type="SMR" id="A8MFD4"/>
<dbReference type="STRING" id="350688.Clos_1554"/>
<dbReference type="KEGG" id="aoe:Clos_1554"/>
<dbReference type="eggNOG" id="COG0249">
    <property type="taxonomic scope" value="Bacteria"/>
</dbReference>
<dbReference type="HOGENOM" id="CLU_002472_4_0_9"/>
<dbReference type="OrthoDB" id="9802448at2"/>
<dbReference type="Proteomes" id="UP000000269">
    <property type="component" value="Chromosome"/>
</dbReference>
<dbReference type="GO" id="GO:0005829">
    <property type="term" value="C:cytosol"/>
    <property type="evidence" value="ECO:0007669"/>
    <property type="project" value="TreeGrafter"/>
</dbReference>
<dbReference type="GO" id="GO:0005524">
    <property type="term" value="F:ATP binding"/>
    <property type="evidence" value="ECO:0007669"/>
    <property type="project" value="UniProtKB-UniRule"/>
</dbReference>
<dbReference type="GO" id="GO:0140664">
    <property type="term" value="F:ATP-dependent DNA damage sensor activity"/>
    <property type="evidence" value="ECO:0007669"/>
    <property type="project" value="InterPro"/>
</dbReference>
<dbReference type="GO" id="GO:0003684">
    <property type="term" value="F:damaged DNA binding"/>
    <property type="evidence" value="ECO:0007669"/>
    <property type="project" value="UniProtKB-UniRule"/>
</dbReference>
<dbReference type="GO" id="GO:0030983">
    <property type="term" value="F:mismatched DNA binding"/>
    <property type="evidence" value="ECO:0007669"/>
    <property type="project" value="InterPro"/>
</dbReference>
<dbReference type="GO" id="GO:0006298">
    <property type="term" value="P:mismatch repair"/>
    <property type="evidence" value="ECO:0007669"/>
    <property type="project" value="UniProtKB-UniRule"/>
</dbReference>
<dbReference type="CDD" id="cd03284">
    <property type="entry name" value="ABC_MutS1"/>
    <property type="match status" value="1"/>
</dbReference>
<dbReference type="FunFam" id="1.10.1420.10:FF:000007">
    <property type="entry name" value="DNA mismatch repair protein MutS"/>
    <property type="match status" value="1"/>
</dbReference>
<dbReference type="FunFam" id="3.40.1170.10:FF:000001">
    <property type="entry name" value="DNA mismatch repair protein MutS"/>
    <property type="match status" value="1"/>
</dbReference>
<dbReference type="FunFam" id="3.40.50.300:FF:000870">
    <property type="entry name" value="MutS protein homolog 4"/>
    <property type="match status" value="1"/>
</dbReference>
<dbReference type="Gene3D" id="1.10.1420.10">
    <property type="match status" value="2"/>
</dbReference>
<dbReference type="Gene3D" id="3.40.1170.10">
    <property type="entry name" value="DNA repair protein MutS, domain I"/>
    <property type="match status" value="1"/>
</dbReference>
<dbReference type="Gene3D" id="3.30.420.110">
    <property type="entry name" value="MutS, connector domain"/>
    <property type="match status" value="1"/>
</dbReference>
<dbReference type="Gene3D" id="3.40.50.300">
    <property type="entry name" value="P-loop containing nucleotide triphosphate hydrolases"/>
    <property type="match status" value="1"/>
</dbReference>
<dbReference type="HAMAP" id="MF_00096">
    <property type="entry name" value="MutS"/>
    <property type="match status" value="1"/>
</dbReference>
<dbReference type="InterPro" id="IPR005748">
    <property type="entry name" value="DNA_mismatch_repair_MutS"/>
</dbReference>
<dbReference type="InterPro" id="IPR007695">
    <property type="entry name" value="DNA_mismatch_repair_MutS-lik_N"/>
</dbReference>
<dbReference type="InterPro" id="IPR017261">
    <property type="entry name" value="DNA_mismatch_repair_MutS/MSH"/>
</dbReference>
<dbReference type="InterPro" id="IPR000432">
    <property type="entry name" value="DNA_mismatch_repair_MutS_C"/>
</dbReference>
<dbReference type="InterPro" id="IPR007861">
    <property type="entry name" value="DNA_mismatch_repair_MutS_clamp"/>
</dbReference>
<dbReference type="InterPro" id="IPR007696">
    <property type="entry name" value="DNA_mismatch_repair_MutS_core"/>
</dbReference>
<dbReference type="InterPro" id="IPR016151">
    <property type="entry name" value="DNA_mismatch_repair_MutS_N"/>
</dbReference>
<dbReference type="InterPro" id="IPR036187">
    <property type="entry name" value="DNA_mismatch_repair_MutS_sf"/>
</dbReference>
<dbReference type="InterPro" id="IPR007860">
    <property type="entry name" value="DNA_mmatch_repair_MutS_con_dom"/>
</dbReference>
<dbReference type="InterPro" id="IPR045076">
    <property type="entry name" value="MutS"/>
</dbReference>
<dbReference type="InterPro" id="IPR036678">
    <property type="entry name" value="MutS_con_dom_sf"/>
</dbReference>
<dbReference type="InterPro" id="IPR027417">
    <property type="entry name" value="P-loop_NTPase"/>
</dbReference>
<dbReference type="NCBIfam" id="TIGR01070">
    <property type="entry name" value="mutS1"/>
    <property type="match status" value="1"/>
</dbReference>
<dbReference type="NCBIfam" id="NF003810">
    <property type="entry name" value="PRK05399.1"/>
    <property type="match status" value="1"/>
</dbReference>
<dbReference type="PANTHER" id="PTHR11361:SF34">
    <property type="entry name" value="DNA MISMATCH REPAIR PROTEIN MSH1, MITOCHONDRIAL"/>
    <property type="match status" value="1"/>
</dbReference>
<dbReference type="PANTHER" id="PTHR11361">
    <property type="entry name" value="DNA MISMATCH REPAIR PROTEIN MUTS FAMILY MEMBER"/>
    <property type="match status" value="1"/>
</dbReference>
<dbReference type="Pfam" id="PF01624">
    <property type="entry name" value="MutS_I"/>
    <property type="match status" value="1"/>
</dbReference>
<dbReference type="Pfam" id="PF05188">
    <property type="entry name" value="MutS_II"/>
    <property type="match status" value="1"/>
</dbReference>
<dbReference type="Pfam" id="PF05192">
    <property type="entry name" value="MutS_III"/>
    <property type="match status" value="1"/>
</dbReference>
<dbReference type="Pfam" id="PF05190">
    <property type="entry name" value="MutS_IV"/>
    <property type="match status" value="1"/>
</dbReference>
<dbReference type="Pfam" id="PF00488">
    <property type="entry name" value="MutS_V"/>
    <property type="match status" value="1"/>
</dbReference>
<dbReference type="PIRSF" id="PIRSF037677">
    <property type="entry name" value="DNA_mis_repair_Msh6"/>
    <property type="match status" value="1"/>
</dbReference>
<dbReference type="SMART" id="SM00534">
    <property type="entry name" value="MUTSac"/>
    <property type="match status" value="1"/>
</dbReference>
<dbReference type="SMART" id="SM00533">
    <property type="entry name" value="MUTSd"/>
    <property type="match status" value="1"/>
</dbReference>
<dbReference type="SUPFAM" id="SSF55271">
    <property type="entry name" value="DNA repair protein MutS, domain I"/>
    <property type="match status" value="1"/>
</dbReference>
<dbReference type="SUPFAM" id="SSF53150">
    <property type="entry name" value="DNA repair protein MutS, domain II"/>
    <property type="match status" value="1"/>
</dbReference>
<dbReference type="SUPFAM" id="SSF48334">
    <property type="entry name" value="DNA repair protein MutS, domain III"/>
    <property type="match status" value="1"/>
</dbReference>
<dbReference type="SUPFAM" id="SSF52540">
    <property type="entry name" value="P-loop containing nucleoside triphosphate hydrolases"/>
    <property type="match status" value="1"/>
</dbReference>
<dbReference type="PROSITE" id="PS00486">
    <property type="entry name" value="DNA_MISMATCH_REPAIR_2"/>
    <property type="match status" value="1"/>
</dbReference>
<feature type="chain" id="PRO_0000335109" description="DNA mismatch repair protein MutS">
    <location>
        <begin position="1"/>
        <end position="880"/>
    </location>
</feature>
<feature type="binding site" evidence="1">
    <location>
        <begin position="625"/>
        <end position="632"/>
    </location>
    <ligand>
        <name>ATP</name>
        <dbReference type="ChEBI" id="CHEBI:30616"/>
    </ligand>
</feature>
<protein>
    <recommendedName>
        <fullName evidence="1">DNA mismatch repair protein MutS</fullName>
    </recommendedName>
</protein>
<proteinExistence type="inferred from homology"/>
<accession>A8MFD4</accession>
<name>MUTS_ALKOO</name>
<organism>
    <name type="scientific">Alkaliphilus oremlandii (strain OhILAs)</name>
    <name type="common">Clostridium oremlandii (strain OhILAs)</name>
    <dbReference type="NCBI Taxonomy" id="350688"/>
    <lineage>
        <taxon>Bacteria</taxon>
        <taxon>Bacillati</taxon>
        <taxon>Bacillota</taxon>
        <taxon>Clostridia</taxon>
        <taxon>Peptostreptococcales</taxon>
        <taxon>Natronincolaceae</taxon>
        <taxon>Alkaliphilus</taxon>
    </lineage>
</organism>
<comment type="function">
    <text evidence="1">This protein is involved in the repair of mismatches in DNA. It is possible that it carries out the mismatch recognition step. This protein has a weak ATPase activity.</text>
</comment>
<comment type="similarity">
    <text evidence="1">Belongs to the DNA mismatch repair MutS family.</text>
</comment>
<comment type="sequence caution" evidence="2">
    <conflict type="erroneous initiation">
        <sequence resource="EMBL-CDS" id="ABW19097"/>
    </conflict>
</comment>
<reference key="1">
    <citation type="submission" date="2007-10" db="EMBL/GenBank/DDBJ databases">
        <title>Complete genome of Alkaliphilus oremlandii OhILAs.</title>
        <authorList>
            <person name="Copeland A."/>
            <person name="Lucas S."/>
            <person name="Lapidus A."/>
            <person name="Barry K."/>
            <person name="Detter J.C."/>
            <person name="Glavina del Rio T."/>
            <person name="Hammon N."/>
            <person name="Israni S."/>
            <person name="Dalin E."/>
            <person name="Tice H."/>
            <person name="Pitluck S."/>
            <person name="Chain P."/>
            <person name="Malfatti S."/>
            <person name="Shin M."/>
            <person name="Vergez L."/>
            <person name="Schmutz J."/>
            <person name="Larimer F."/>
            <person name="Land M."/>
            <person name="Hauser L."/>
            <person name="Kyrpides N."/>
            <person name="Mikhailova N."/>
            <person name="Stolz J.F."/>
            <person name="Dawson A."/>
            <person name="Fisher E."/>
            <person name="Crable B."/>
            <person name="Perera E."/>
            <person name="Lisak J."/>
            <person name="Ranganathan M."/>
            <person name="Basu P."/>
            <person name="Richardson P."/>
        </authorList>
    </citation>
    <scope>NUCLEOTIDE SEQUENCE [LARGE SCALE GENOMIC DNA]</scope>
    <source>
        <strain>OhILAs</strain>
    </source>
</reference>
<keyword id="KW-0067">ATP-binding</keyword>
<keyword id="KW-0227">DNA damage</keyword>
<keyword id="KW-0234">DNA repair</keyword>
<keyword id="KW-0238">DNA-binding</keyword>
<keyword id="KW-0547">Nucleotide-binding</keyword>
<keyword id="KW-1185">Reference proteome</keyword>
<gene>
    <name evidence="1" type="primary">mutS</name>
    <name type="ordered locus">Clos_1554</name>
</gene>